<organism>
    <name type="scientific">Staphylococcus aureus (strain N315)</name>
    <dbReference type="NCBI Taxonomy" id="158879"/>
    <lineage>
        <taxon>Bacteria</taxon>
        <taxon>Bacillati</taxon>
        <taxon>Bacillota</taxon>
        <taxon>Bacilli</taxon>
        <taxon>Bacillales</taxon>
        <taxon>Staphylococcaceae</taxon>
        <taxon>Staphylococcus</taxon>
    </lineage>
</organism>
<protein>
    <recommendedName>
        <fullName evidence="1">ATP-dependent Clp protease ATP-binding subunit ClpX</fullName>
    </recommendedName>
</protein>
<accession>P63790</accession>
<accession>Q99TI7</accession>
<comment type="function">
    <text evidence="1">ATP-dependent specificity component of the Clp protease. It directs the protease to specific substrates. Can perform chaperone functions in the absence of ClpP.</text>
</comment>
<comment type="subunit">
    <text evidence="1">Component of the ClpX-ClpP complex. Forms a hexameric ring that, in the presence of ATP, binds to fourteen ClpP subunits assembled into a disk-like structure with a central cavity, resembling the structure of eukaryotic proteasomes.</text>
</comment>
<comment type="similarity">
    <text evidence="1">Belongs to the ClpX chaperone family.</text>
</comment>
<evidence type="ECO:0000255" key="1">
    <source>
        <dbReference type="HAMAP-Rule" id="MF_00175"/>
    </source>
</evidence>
<evidence type="ECO:0000255" key="2">
    <source>
        <dbReference type="PROSITE-ProRule" id="PRU01250"/>
    </source>
</evidence>
<sequence length="420" mass="46297">MFKFNEDEENLKCSFCGKDQDQVKKLVAGSGVYICNECIELCSEIVEEELAQNTSEAMTELPTPKEIMDHLNEYVIGQEKAKKSLAVAVYNHYKRIQQLGPKEDDVELQKSNIALIGPTGSGKTLLAQTLAKTLNVPFAIADATSLTEAGYVGDDVENILLRLIQAADFDIDKAEKGIIYVDEIDKIARKSENTSITRDVSGEGVQQALLKILEGTTASVPPQGGRKHPNQEMIQIDTTNILFILGGAFDGIEEVIKRRLGEKVIGFSSNEADKYDEQALLAQIRPEDLQAYGLIPEFIGRVPIVANLETLDVTALKNILTQPKNALVKQYTKMLELDDVDLEFTEEALSAISEKAIERKTGARGLRSIIEESLIDIMFDVPSNENVTKVVITAQTINEETEPELYDAEGNLINNSKTSA</sequence>
<feature type="chain" id="PRO_0000160421" description="ATP-dependent Clp protease ATP-binding subunit ClpX">
    <location>
        <begin position="1"/>
        <end position="420"/>
    </location>
</feature>
<feature type="domain" description="ClpX-type ZB" evidence="2">
    <location>
        <begin position="1"/>
        <end position="54"/>
    </location>
</feature>
<feature type="binding site" evidence="2">
    <location>
        <position position="13"/>
    </location>
    <ligand>
        <name>Zn(2+)</name>
        <dbReference type="ChEBI" id="CHEBI:29105"/>
    </ligand>
</feature>
<feature type="binding site" evidence="2">
    <location>
        <position position="16"/>
    </location>
    <ligand>
        <name>Zn(2+)</name>
        <dbReference type="ChEBI" id="CHEBI:29105"/>
    </ligand>
</feature>
<feature type="binding site" evidence="2">
    <location>
        <position position="35"/>
    </location>
    <ligand>
        <name>Zn(2+)</name>
        <dbReference type="ChEBI" id="CHEBI:29105"/>
    </ligand>
</feature>
<feature type="binding site" evidence="2">
    <location>
        <position position="38"/>
    </location>
    <ligand>
        <name>Zn(2+)</name>
        <dbReference type="ChEBI" id="CHEBI:29105"/>
    </ligand>
</feature>
<feature type="binding site" evidence="1">
    <location>
        <begin position="118"/>
        <end position="125"/>
    </location>
    <ligand>
        <name>ATP</name>
        <dbReference type="ChEBI" id="CHEBI:30616"/>
    </ligand>
</feature>
<reference key="1">
    <citation type="journal article" date="2001" name="Lancet">
        <title>Whole genome sequencing of meticillin-resistant Staphylococcus aureus.</title>
        <authorList>
            <person name="Kuroda M."/>
            <person name="Ohta T."/>
            <person name="Uchiyama I."/>
            <person name="Baba T."/>
            <person name="Yuzawa H."/>
            <person name="Kobayashi I."/>
            <person name="Cui L."/>
            <person name="Oguchi A."/>
            <person name="Aoki K."/>
            <person name="Nagai Y."/>
            <person name="Lian J.-Q."/>
            <person name="Ito T."/>
            <person name="Kanamori M."/>
            <person name="Matsumaru H."/>
            <person name="Maruyama A."/>
            <person name="Murakami H."/>
            <person name="Hosoyama A."/>
            <person name="Mizutani-Ui Y."/>
            <person name="Takahashi N.K."/>
            <person name="Sawano T."/>
            <person name="Inoue R."/>
            <person name="Kaito C."/>
            <person name="Sekimizu K."/>
            <person name="Hirakawa H."/>
            <person name="Kuhara S."/>
            <person name="Goto S."/>
            <person name="Yabuzaki J."/>
            <person name="Kanehisa M."/>
            <person name="Yamashita A."/>
            <person name="Oshima K."/>
            <person name="Furuya K."/>
            <person name="Yoshino C."/>
            <person name="Shiba T."/>
            <person name="Hattori M."/>
            <person name="Ogasawara N."/>
            <person name="Hayashi H."/>
            <person name="Hiramatsu K."/>
        </authorList>
    </citation>
    <scope>NUCLEOTIDE SEQUENCE [LARGE SCALE GENOMIC DNA]</scope>
    <source>
        <strain>N315</strain>
    </source>
</reference>
<reference key="2">
    <citation type="submission" date="2007-10" db="UniProtKB">
        <title>Shotgun proteomic analysis of total and membrane protein extracts of S. aureus strain N315.</title>
        <authorList>
            <person name="Vaezzadeh A.R."/>
            <person name="Deshusses J."/>
            <person name="Lescuyer P."/>
            <person name="Hochstrasser D.F."/>
        </authorList>
    </citation>
    <scope>IDENTIFICATION BY MASS SPECTROMETRY [LARGE SCALE ANALYSIS]</scope>
    <source>
        <strain>N315</strain>
    </source>
</reference>
<name>CLPX_STAAN</name>
<gene>
    <name evidence="1" type="primary">clpX</name>
    <name type="ordered locus">SA1498</name>
</gene>
<dbReference type="EMBL" id="BA000018">
    <property type="protein sequence ID" value="BAB42765.1"/>
    <property type="molecule type" value="Genomic_DNA"/>
</dbReference>
<dbReference type="PIR" id="H89950">
    <property type="entry name" value="H89950"/>
</dbReference>
<dbReference type="RefSeq" id="WP_000472302.1">
    <property type="nucleotide sequence ID" value="NC_002745.2"/>
</dbReference>
<dbReference type="SMR" id="P63790"/>
<dbReference type="EnsemblBacteria" id="BAB42765">
    <property type="protein sequence ID" value="BAB42765"/>
    <property type="gene ID" value="BAB42765"/>
</dbReference>
<dbReference type="KEGG" id="sau:SA1498"/>
<dbReference type="HOGENOM" id="CLU_014218_8_2_9"/>
<dbReference type="GO" id="GO:0009376">
    <property type="term" value="C:HslUV protease complex"/>
    <property type="evidence" value="ECO:0007669"/>
    <property type="project" value="TreeGrafter"/>
</dbReference>
<dbReference type="GO" id="GO:0005524">
    <property type="term" value="F:ATP binding"/>
    <property type="evidence" value="ECO:0007669"/>
    <property type="project" value="UniProtKB-UniRule"/>
</dbReference>
<dbReference type="GO" id="GO:0016887">
    <property type="term" value="F:ATP hydrolysis activity"/>
    <property type="evidence" value="ECO:0007669"/>
    <property type="project" value="InterPro"/>
</dbReference>
<dbReference type="GO" id="GO:0140662">
    <property type="term" value="F:ATP-dependent protein folding chaperone"/>
    <property type="evidence" value="ECO:0007669"/>
    <property type="project" value="InterPro"/>
</dbReference>
<dbReference type="GO" id="GO:0046983">
    <property type="term" value="F:protein dimerization activity"/>
    <property type="evidence" value="ECO:0007669"/>
    <property type="project" value="InterPro"/>
</dbReference>
<dbReference type="GO" id="GO:0051082">
    <property type="term" value="F:unfolded protein binding"/>
    <property type="evidence" value="ECO:0007669"/>
    <property type="project" value="UniProtKB-UniRule"/>
</dbReference>
<dbReference type="GO" id="GO:0008270">
    <property type="term" value="F:zinc ion binding"/>
    <property type="evidence" value="ECO:0007669"/>
    <property type="project" value="InterPro"/>
</dbReference>
<dbReference type="GO" id="GO:0051301">
    <property type="term" value="P:cell division"/>
    <property type="evidence" value="ECO:0007669"/>
    <property type="project" value="TreeGrafter"/>
</dbReference>
<dbReference type="GO" id="GO:0051603">
    <property type="term" value="P:proteolysis involved in protein catabolic process"/>
    <property type="evidence" value="ECO:0007669"/>
    <property type="project" value="TreeGrafter"/>
</dbReference>
<dbReference type="CDD" id="cd19497">
    <property type="entry name" value="RecA-like_ClpX"/>
    <property type="match status" value="1"/>
</dbReference>
<dbReference type="FunFam" id="1.10.8.60:FF:000002">
    <property type="entry name" value="ATP-dependent Clp protease ATP-binding subunit ClpX"/>
    <property type="match status" value="1"/>
</dbReference>
<dbReference type="FunFam" id="3.40.50.300:FF:000005">
    <property type="entry name" value="ATP-dependent Clp protease ATP-binding subunit ClpX"/>
    <property type="match status" value="1"/>
</dbReference>
<dbReference type="Gene3D" id="1.10.8.60">
    <property type="match status" value="1"/>
</dbReference>
<dbReference type="Gene3D" id="6.20.220.10">
    <property type="entry name" value="ClpX chaperone, C4-type zinc finger domain"/>
    <property type="match status" value="1"/>
</dbReference>
<dbReference type="Gene3D" id="3.40.50.300">
    <property type="entry name" value="P-loop containing nucleotide triphosphate hydrolases"/>
    <property type="match status" value="1"/>
</dbReference>
<dbReference type="HAMAP" id="MF_00175">
    <property type="entry name" value="ClpX"/>
    <property type="match status" value="1"/>
</dbReference>
<dbReference type="InterPro" id="IPR003593">
    <property type="entry name" value="AAA+_ATPase"/>
</dbReference>
<dbReference type="InterPro" id="IPR050052">
    <property type="entry name" value="ATP-dep_Clp_protease_ClpX"/>
</dbReference>
<dbReference type="InterPro" id="IPR003959">
    <property type="entry name" value="ATPase_AAA_core"/>
</dbReference>
<dbReference type="InterPro" id="IPR019489">
    <property type="entry name" value="Clp_ATPase_C"/>
</dbReference>
<dbReference type="InterPro" id="IPR004487">
    <property type="entry name" value="Clp_protease_ATP-bd_su_ClpX"/>
</dbReference>
<dbReference type="InterPro" id="IPR046425">
    <property type="entry name" value="ClpX_bact"/>
</dbReference>
<dbReference type="InterPro" id="IPR027417">
    <property type="entry name" value="P-loop_NTPase"/>
</dbReference>
<dbReference type="InterPro" id="IPR010603">
    <property type="entry name" value="Znf_CppX_C4"/>
</dbReference>
<dbReference type="InterPro" id="IPR038366">
    <property type="entry name" value="Znf_CppX_C4_sf"/>
</dbReference>
<dbReference type="NCBIfam" id="TIGR00382">
    <property type="entry name" value="clpX"/>
    <property type="match status" value="1"/>
</dbReference>
<dbReference type="NCBIfam" id="NF003745">
    <property type="entry name" value="PRK05342.1"/>
    <property type="match status" value="1"/>
</dbReference>
<dbReference type="PANTHER" id="PTHR48102:SF7">
    <property type="entry name" value="ATP-DEPENDENT CLP PROTEASE ATP-BINDING SUBUNIT CLPX-LIKE, MITOCHONDRIAL"/>
    <property type="match status" value="1"/>
</dbReference>
<dbReference type="PANTHER" id="PTHR48102">
    <property type="entry name" value="ATP-DEPENDENT CLP PROTEASE ATP-BINDING SUBUNIT CLPX-LIKE, MITOCHONDRIAL-RELATED"/>
    <property type="match status" value="1"/>
</dbReference>
<dbReference type="Pfam" id="PF07724">
    <property type="entry name" value="AAA_2"/>
    <property type="match status" value="1"/>
</dbReference>
<dbReference type="Pfam" id="PF10431">
    <property type="entry name" value="ClpB_D2-small"/>
    <property type="match status" value="1"/>
</dbReference>
<dbReference type="Pfam" id="PF06689">
    <property type="entry name" value="zf-C4_ClpX"/>
    <property type="match status" value="1"/>
</dbReference>
<dbReference type="SMART" id="SM00382">
    <property type="entry name" value="AAA"/>
    <property type="match status" value="1"/>
</dbReference>
<dbReference type="SMART" id="SM01086">
    <property type="entry name" value="ClpB_D2-small"/>
    <property type="match status" value="1"/>
</dbReference>
<dbReference type="SMART" id="SM00994">
    <property type="entry name" value="zf-C4_ClpX"/>
    <property type="match status" value="1"/>
</dbReference>
<dbReference type="SUPFAM" id="SSF57716">
    <property type="entry name" value="Glucocorticoid receptor-like (DNA-binding domain)"/>
    <property type="match status" value="1"/>
</dbReference>
<dbReference type="SUPFAM" id="SSF52540">
    <property type="entry name" value="P-loop containing nucleoside triphosphate hydrolases"/>
    <property type="match status" value="1"/>
</dbReference>
<dbReference type="PROSITE" id="PS51902">
    <property type="entry name" value="CLPX_ZB"/>
    <property type="match status" value="1"/>
</dbReference>
<keyword id="KW-0067">ATP-binding</keyword>
<keyword id="KW-0143">Chaperone</keyword>
<keyword id="KW-0479">Metal-binding</keyword>
<keyword id="KW-0547">Nucleotide-binding</keyword>
<keyword id="KW-0862">Zinc</keyword>
<proteinExistence type="evidence at protein level"/>